<comment type="function">
    <text evidence="1">O-methyltransferase that catalyzes the 2 O-methylation steps in the ubiquinone biosynthetic pathway.</text>
</comment>
<comment type="catalytic activity">
    <reaction evidence="1">
        <text>a 3-demethylubiquinol + S-adenosyl-L-methionine = a ubiquinol + S-adenosyl-L-homocysteine + H(+)</text>
        <dbReference type="Rhea" id="RHEA:44380"/>
        <dbReference type="Rhea" id="RHEA-COMP:9566"/>
        <dbReference type="Rhea" id="RHEA-COMP:10914"/>
        <dbReference type="ChEBI" id="CHEBI:15378"/>
        <dbReference type="ChEBI" id="CHEBI:17976"/>
        <dbReference type="ChEBI" id="CHEBI:57856"/>
        <dbReference type="ChEBI" id="CHEBI:59789"/>
        <dbReference type="ChEBI" id="CHEBI:84422"/>
        <dbReference type="EC" id="2.1.1.64"/>
    </reaction>
</comment>
<comment type="catalytic activity">
    <reaction evidence="1">
        <text>a 3-(all-trans-polyprenyl)benzene-1,2-diol + S-adenosyl-L-methionine = a 2-methoxy-6-(all-trans-polyprenyl)phenol + S-adenosyl-L-homocysteine + H(+)</text>
        <dbReference type="Rhea" id="RHEA:31411"/>
        <dbReference type="Rhea" id="RHEA-COMP:9550"/>
        <dbReference type="Rhea" id="RHEA-COMP:9551"/>
        <dbReference type="ChEBI" id="CHEBI:15378"/>
        <dbReference type="ChEBI" id="CHEBI:57856"/>
        <dbReference type="ChEBI" id="CHEBI:59789"/>
        <dbReference type="ChEBI" id="CHEBI:62729"/>
        <dbReference type="ChEBI" id="CHEBI:62731"/>
        <dbReference type="EC" id="2.1.1.222"/>
    </reaction>
</comment>
<comment type="pathway">
    <text evidence="1">Cofactor biosynthesis; ubiquinone biosynthesis.</text>
</comment>
<comment type="similarity">
    <text evidence="1">Belongs to the methyltransferase superfamily. UbiG/COQ3 family.</text>
</comment>
<protein>
    <recommendedName>
        <fullName evidence="1">Ubiquinone biosynthesis O-methyltransferase</fullName>
    </recommendedName>
    <alternativeName>
        <fullName evidence="1">2-polyprenyl-6-hydroxyphenol methylase</fullName>
        <ecNumber evidence="1">2.1.1.222</ecNumber>
    </alternativeName>
    <alternativeName>
        <fullName evidence="1">3-demethylubiquinone 3-O-methyltransferase</fullName>
        <ecNumber evidence="1">2.1.1.64</ecNumber>
    </alternativeName>
</protein>
<proteinExistence type="inferred from homology"/>
<organism>
    <name type="scientific">Rickettsia bellii (strain OSU 85-389)</name>
    <dbReference type="NCBI Taxonomy" id="391896"/>
    <lineage>
        <taxon>Bacteria</taxon>
        <taxon>Pseudomonadati</taxon>
        <taxon>Pseudomonadota</taxon>
        <taxon>Alphaproteobacteria</taxon>
        <taxon>Rickettsiales</taxon>
        <taxon>Rickettsiaceae</taxon>
        <taxon>Rickettsieae</taxon>
        <taxon>Rickettsia</taxon>
        <taxon>belli group</taxon>
    </lineage>
</organism>
<feature type="chain" id="PRO_1000013917" description="Ubiquinone biosynthesis O-methyltransferase">
    <location>
        <begin position="1"/>
        <end position="240"/>
    </location>
</feature>
<feature type="binding site" evidence="1">
    <location>
        <position position="36"/>
    </location>
    <ligand>
        <name>S-adenosyl-L-methionine</name>
        <dbReference type="ChEBI" id="CHEBI:59789"/>
    </ligand>
</feature>
<feature type="binding site" evidence="1">
    <location>
        <position position="60"/>
    </location>
    <ligand>
        <name>S-adenosyl-L-methionine</name>
        <dbReference type="ChEBI" id="CHEBI:59789"/>
    </ligand>
</feature>
<feature type="binding site" evidence="1">
    <location>
        <position position="81"/>
    </location>
    <ligand>
        <name>S-adenosyl-L-methionine</name>
        <dbReference type="ChEBI" id="CHEBI:59789"/>
    </ligand>
</feature>
<feature type="binding site" evidence="1">
    <location>
        <position position="123"/>
    </location>
    <ligand>
        <name>S-adenosyl-L-methionine</name>
        <dbReference type="ChEBI" id="CHEBI:59789"/>
    </ligand>
</feature>
<dbReference type="EC" id="2.1.1.222" evidence="1"/>
<dbReference type="EC" id="2.1.1.64" evidence="1"/>
<dbReference type="EMBL" id="CP000849">
    <property type="protein sequence ID" value="ABV79411.1"/>
    <property type="molecule type" value="Genomic_DNA"/>
</dbReference>
<dbReference type="RefSeq" id="WP_011477130.1">
    <property type="nucleotide sequence ID" value="NC_009883.1"/>
</dbReference>
<dbReference type="SMR" id="A8GX11"/>
<dbReference type="KEGG" id="rbo:A1I_05420"/>
<dbReference type="HOGENOM" id="CLU_042432_0_0_5"/>
<dbReference type="UniPathway" id="UPA00232"/>
<dbReference type="GO" id="GO:0102208">
    <property type="term" value="F:2-polyprenyl-6-hydroxyphenol methylase activity"/>
    <property type="evidence" value="ECO:0007669"/>
    <property type="project" value="UniProtKB-EC"/>
</dbReference>
<dbReference type="GO" id="GO:0061542">
    <property type="term" value="F:3-demethylubiquinol 3-O-methyltransferase activity"/>
    <property type="evidence" value="ECO:0007669"/>
    <property type="project" value="UniProtKB-UniRule"/>
</dbReference>
<dbReference type="GO" id="GO:0010420">
    <property type="term" value="F:polyprenyldihydroxybenzoate methyltransferase activity"/>
    <property type="evidence" value="ECO:0007669"/>
    <property type="project" value="InterPro"/>
</dbReference>
<dbReference type="GO" id="GO:0032259">
    <property type="term" value="P:methylation"/>
    <property type="evidence" value="ECO:0007669"/>
    <property type="project" value="UniProtKB-KW"/>
</dbReference>
<dbReference type="CDD" id="cd02440">
    <property type="entry name" value="AdoMet_MTases"/>
    <property type="match status" value="1"/>
</dbReference>
<dbReference type="Gene3D" id="3.40.50.150">
    <property type="entry name" value="Vaccinia Virus protein VP39"/>
    <property type="match status" value="1"/>
</dbReference>
<dbReference type="HAMAP" id="MF_00472">
    <property type="entry name" value="UbiG"/>
    <property type="match status" value="1"/>
</dbReference>
<dbReference type="InterPro" id="IPR029063">
    <property type="entry name" value="SAM-dependent_MTases_sf"/>
</dbReference>
<dbReference type="InterPro" id="IPR010233">
    <property type="entry name" value="UbiG_MeTrfase"/>
</dbReference>
<dbReference type="NCBIfam" id="TIGR01983">
    <property type="entry name" value="UbiG"/>
    <property type="match status" value="1"/>
</dbReference>
<dbReference type="PANTHER" id="PTHR43464">
    <property type="entry name" value="METHYLTRANSFERASE"/>
    <property type="match status" value="1"/>
</dbReference>
<dbReference type="PANTHER" id="PTHR43464:SF19">
    <property type="entry name" value="UBIQUINONE BIOSYNTHESIS O-METHYLTRANSFERASE, MITOCHONDRIAL"/>
    <property type="match status" value="1"/>
</dbReference>
<dbReference type="Pfam" id="PF13489">
    <property type="entry name" value="Methyltransf_23"/>
    <property type="match status" value="1"/>
</dbReference>
<dbReference type="SUPFAM" id="SSF53335">
    <property type="entry name" value="S-adenosyl-L-methionine-dependent methyltransferases"/>
    <property type="match status" value="1"/>
</dbReference>
<gene>
    <name evidence="1" type="primary">ubiG</name>
    <name type="ordered locus">A1I_05420</name>
</gene>
<accession>A8GX11</accession>
<evidence type="ECO:0000255" key="1">
    <source>
        <dbReference type="HAMAP-Rule" id="MF_00472"/>
    </source>
</evidence>
<name>UBIG_RICB8</name>
<sequence length="240" mass="27537">MSSVNKNELEKFEKISHSWWNKDGEFGILHRINPIRLNYIIEKIKSHYNDISDLEILDVGCGGGLIATNLTMQGFNVTAIDALQSNIDTALAYATENNIKVNYLKSTIEELENDKQYDVVICLEVIEHVENVQEFMLNLVKRIKPKGIAIISTINRTKKAYLLGIIAAEYILGWVPKNTHDYSKFLKPSEIYEMLENTNIEIEELKGLVYNMAEDKWVLSDDDIDVNYFVYLKKNVLGVI</sequence>
<reference key="1">
    <citation type="submission" date="2007-09" db="EMBL/GenBank/DDBJ databases">
        <title>Complete genome sequencing of Rickettsia bellii.</title>
        <authorList>
            <person name="Madan A."/>
            <person name="Lee H."/>
            <person name="Madan A."/>
            <person name="Yoon J.-G."/>
            <person name="Ryu G.-Y."/>
            <person name="Dasch G."/>
            <person name="Ereemeva M."/>
        </authorList>
    </citation>
    <scope>NUCLEOTIDE SEQUENCE [LARGE SCALE GENOMIC DNA]</scope>
    <source>
        <strain>OSU 85-389</strain>
    </source>
</reference>
<keyword id="KW-0489">Methyltransferase</keyword>
<keyword id="KW-0949">S-adenosyl-L-methionine</keyword>
<keyword id="KW-0808">Transferase</keyword>
<keyword id="KW-0831">Ubiquinone biosynthesis</keyword>